<reference key="1">
    <citation type="submission" date="2009-01" db="EMBL/GenBank/DDBJ databases">
        <title>Complete sequence of Clostridium cellulolyticum H10.</title>
        <authorList>
            <consortium name="US DOE Joint Genome Institute"/>
            <person name="Lucas S."/>
            <person name="Copeland A."/>
            <person name="Lapidus A."/>
            <person name="Glavina del Rio T."/>
            <person name="Dalin E."/>
            <person name="Tice H."/>
            <person name="Bruce D."/>
            <person name="Goodwin L."/>
            <person name="Pitluck S."/>
            <person name="Chertkov O."/>
            <person name="Saunders E."/>
            <person name="Brettin T."/>
            <person name="Detter J.C."/>
            <person name="Han C."/>
            <person name="Larimer F."/>
            <person name="Land M."/>
            <person name="Hauser L."/>
            <person name="Kyrpides N."/>
            <person name="Ivanova N."/>
            <person name="Zhou J."/>
            <person name="Richardson P."/>
        </authorList>
    </citation>
    <scope>NUCLEOTIDE SEQUENCE [LARGE SCALE GENOMIC DNA]</scope>
    <source>
        <strain>ATCC 35319 / DSM 5812 / JCM 6584 / H10</strain>
    </source>
</reference>
<protein>
    <recommendedName>
        <fullName evidence="1">Type III pantothenate kinase</fullName>
        <ecNumber evidence="1">2.7.1.33</ecNumber>
    </recommendedName>
    <alternativeName>
        <fullName evidence="1">PanK-III</fullName>
    </alternativeName>
    <alternativeName>
        <fullName evidence="1">Pantothenic acid kinase</fullName>
    </alternativeName>
</protein>
<gene>
    <name evidence="1" type="primary">coaX</name>
    <name type="ordered locus">Ccel_0136</name>
</gene>
<comment type="function">
    <text evidence="1">Catalyzes the phosphorylation of pantothenate (Pan), the first step in CoA biosynthesis.</text>
</comment>
<comment type="catalytic activity">
    <reaction evidence="1">
        <text>(R)-pantothenate + ATP = (R)-4'-phosphopantothenate + ADP + H(+)</text>
        <dbReference type="Rhea" id="RHEA:16373"/>
        <dbReference type="ChEBI" id="CHEBI:10986"/>
        <dbReference type="ChEBI" id="CHEBI:15378"/>
        <dbReference type="ChEBI" id="CHEBI:29032"/>
        <dbReference type="ChEBI" id="CHEBI:30616"/>
        <dbReference type="ChEBI" id="CHEBI:456216"/>
        <dbReference type="EC" id="2.7.1.33"/>
    </reaction>
</comment>
<comment type="cofactor">
    <cofactor evidence="1">
        <name>NH4(+)</name>
        <dbReference type="ChEBI" id="CHEBI:28938"/>
    </cofactor>
    <cofactor evidence="1">
        <name>K(+)</name>
        <dbReference type="ChEBI" id="CHEBI:29103"/>
    </cofactor>
    <text evidence="1">A monovalent cation. Ammonium or potassium.</text>
</comment>
<comment type="pathway">
    <text evidence="1">Cofactor biosynthesis; coenzyme A biosynthesis; CoA from (R)-pantothenate: step 1/5.</text>
</comment>
<comment type="subunit">
    <text evidence="1">Homodimer.</text>
</comment>
<comment type="subcellular location">
    <subcellularLocation>
        <location evidence="1">Cytoplasm</location>
    </subcellularLocation>
</comment>
<comment type="similarity">
    <text evidence="1">Belongs to the type III pantothenate kinase family.</text>
</comment>
<organism>
    <name type="scientific">Ruminiclostridium cellulolyticum (strain ATCC 35319 / DSM 5812 / JCM 6584 / H10)</name>
    <name type="common">Clostridium cellulolyticum</name>
    <dbReference type="NCBI Taxonomy" id="394503"/>
    <lineage>
        <taxon>Bacteria</taxon>
        <taxon>Bacillati</taxon>
        <taxon>Bacillota</taxon>
        <taxon>Clostridia</taxon>
        <taxon>Eubacteriales</taxon>
        <taxon>Oscillospiraceae</taxon>
        <taxon>Ruminiclostridium</taxon>
    </lineage>
</organism>
<keyword id="KW-0067">ATP-binding</keyword>
<keyword id="KW-0173">Coenzyme A biosynthesis</keyword>
<keyword id="KW-0963">Cytoplasm</keyword>
<keyword id="KW-0418">Kinase</keyword>
<keyword id="KW-0479">Metal-binding</keyword>
<keyword id="KW-0547">Nucleotide-binding</keyword>
<keyword id="KW-0630">Potassium</keyword>
<keyword id="KW-1185">Reference proteome</keyword>
<keyword id="KW-0808">Transferase</keyword>
<feature type="chain" id="PRO_1000165192" description="Type III pantothenate kinase">
    <location>
        <begin position="1"/>
        <end position="255"/>
    </location>
</feature>
<feature type="active site" description="Proton acceptor" evidence="1">
    <location>
        <position position="109"/>
    </location>
</feature>
<feature type="binding site" evidence="1">
    <location>
        <begin position="6"/>
        <end position="13"/>
    </location>
    <ligand>
        <name>ATP</name>
        <dbReference type="ChEBI" id="CHEBI:30616"/>
    </ligand>
</feature>
<feature type="binding site" evidence="1">
    <location>
        <position position="100"/>
    </location>
    <ligand>
        <name>substrate</name>
    </ligand>
</feature>
<feature type="binding site" evidence="1">
    <location>
        <begin position="107"/>
        <end position="110"/>
    </location>
    <ligand>
        <name>substrate</name>
    </ligand>
</feature>
<feature type="binding site" evidence="1">
    <location>
        <position position="129"/>
    </location>
    <ligand>
        <name>K(+)</name>
        <dbReference type="ChEBI" id="CHEBI:29103"/>
    </ligand>
</feature>
<feature type="binding site" evidence="1">
    <location>
        <position position="132"/>
    </location>
    <ligand>
        <name>ATP</name>
        <dbReference type="ChEBI" id="CHEBI:30616"/>
    </ligand>
</feature>
<feature type="binding site" evidence="1">
    <location>
        <position position="184"/>
    </location>
    <ligand>
        <name>substrate</name>
    </ligand>
</feature>
<accession>B8I4H0</accession>
<name>COAX_RUMCH</name>
<evidence type="ECO:0000255" key="1">
    <source>
        <dbReference type="HAMAP-Rule" id="MF_01274"/>
    </source>
</evidence>
<sequence length="255" mass="27978">MVLVVDVGNTHIVLGVFEGKKLLANWRLGTNKERTSDELGMLILGLFNHEKLSIDKVKSVVVASVVPPIMYTLEHAIKKYINIQPMIIGPGTKTGINIRYQNPKEVGADRIVNAVAGFELYGGPLIIVDMGTATTFCAISEKGEYLGGVICPGIKISAEALYQKAAKLPRIDLVKPESVIGKNTISSMQSGVFFGYVGQVDYIVNRIKNEMHEENVRVIATGGISRMITEESITINEFNPTLTLEGLRLIYERNV</sequence>
<proteinExistence type="inferred from homology"/>
<dbReference type="EC" id="2.7.1.33" evidence="1"/>
<dbReference type="EMBL" id="CP001348">
    <property type="protein sequence ID" value="ACL74524.1"/>
    <property type="molecule type" value="Genomic_DNA"/>
</dbReference>
<dbReference type="RefSeq" id="WP_012634590.1">
    <property type="nucleotide sequence ID" value="NC_011898.1"/>
</dbReference>
<dbReference type="SMR" id="B8I4H0"/>
<dbReference type="STRING" id="394503.Ccel_0136"/>
<dbReference type="KEGG" id="cce:Ccel_0136"/>
<dbReference type="eggNOG" id="COG1521">
    <property type="taxonomic scope" value="Bacteria"/>
</dbReference>
<dbReference type="HOGENOM" id="CLU_066627_1_0_9"/>
<dbReference type="OrthoDB" id="9804707at2"/>
<dbReference type="UniPathway" id="UPA00241">
    <property type="reaction ID" value="UER00352"/>
</dbReference>
<dbReference type="Proteomes" id="UP000001349">
    <property type="component" value="Chromosome"/>
</dbReference>
<dbReference type="GO" id="GO:0005737">
    <property type="term" value="C:cytoplasm"/>
    <property type="evidence" value="ECO:0007669"/>
    <property type="project" value="UniProtKB-SubCell"/>
</dbReference>
<dbReference type="GO" id="GO:0005524">
    <property type="term" value="F:ATP binding"/>
    <property type="evidence" value="ECO:0007669"/>
    <property type="project" value="UniProtKB-UniRule"/>
</dbReference>
<dbReference type="GO" id="GO:0046872">
    <property type="term" value="F:metal ion binding"/>
    <property type="evidence" value="ECO:0007669"/>
    <property type="project" value="UniProtKB-KW"/>
</dbReference>
<dbReference type="GO" id="GO:0004594">
    <property type="term" value="F:pantothenate kinase activity"/>
    <property type="evidence" value="ECO:0007669"/>
    <property type="project" value="UniProtKB-UniRule"/>
</dbReference>
<dbReference type="GO" id="GO:0015937">
    <property type="term" value="P:coenzyme A biosynthetic process"/>
    <property type="evidence" value="ECO:0007669"/>
    <property type="project" value="UniProtKB-UniRule"/>
</dbReference>
<dbReference type="CDD" id="cd24015">
    <property type="entry name" value="ASKHA_NBD_PanK-III"/>
    <property type="match status" value="1"/>
</dbReference>
<dbReference type="Gene3D" id="3.30.420.40">
    <property type="match status" value="2"/>
</dbReference>
<dbReference type="HAMAP" id="MF_01274">
    <property type="entry name" value="Pantothen_kinase_3"/>
    <property type="match status" value="1"/>
</dbReference>
<dbReference type="InterPro" id="IPR043129">
    <property type="entry name" value="ATPase_NBD"/>
</dbReference>
<dbReference type="InterPro" id="IPR004619">
    <property type="entry name" value="Type_III_PanK"/>
</dbReference>
<dbReference type="NCBIfam" id="TIGR00671">
    <property type="entry name" value="baf"/>
    <property type="match status" value="1"/>
</dbReference>
<dbReference type="NCBIfam" id="NF009847">
    <property type="entry name" value="PRK13318.1-5"/>
    <property type="match status" value="1"/>
</dbReference>
<dbReference type="NCBIfam" id="NF009848">
    <property type="entry name" value="PRK13318.1-6"/>
    <property type="match status" value="1"/>
</dbReference>
<dbReference type="NCBIfam" id="NF009855">
    <property type="entry name" value="PRK13321.1"/>
    <property type="match status" value="1"/>
</dbReference>
<dbReference type="PANTHER" id="PTHR34265">
    <property type="entry name" value="TYPE III PANTOTHENATE KINASE"/>
    <property type="match status" value="1"/>
</dbReference>
<dbReference type="PANTHER" id="PTHR34265:SF1">
    <property type="entry name" value="TYPE III PANTOTHENATE KINASE"/>
    <property type="match status" value="1"/>
</dbReference>
<dbReference type="Pfam" id="PF03309">
    <property type="entry name" value="Pan_kinase"/>
    <property type="match status" value="1"/>
</dbReference>
<dbReference type="SUPFAM" id="SSF53067">
    <property type="entry name" value="Actin-like ATPase domain"/>
    <property type="match status" value="2"/>
</dbReference>